<proteinExistence type="evidence at protein level"/>
<keyword id="KW-0929">Antimicrobial</keyword>
<keyword id="KW-0081">Bacteriolytic enzyme</keyword>
<keyword id="KW-0903">Direct protein sequencing</keyword>
<keyword id="KW-1015">Disulfide bond</keyword>
<keyword id="KW-0326">Glycosidase</keyword>
<keyword id="KW-0378">Hydrolase</keyword>
<keyword id="KW-1185">Reference proteome</keyword>
<keyword id="KW-0964">Secreted</keyword>
<dbReference type="EC" id="3.2.1.17"/>
<dbReference type="PIR" id="JT0526">
    <property type="entry name" value="JT0526"/>
</dbReference>
<dbReference type="SMR" id="P19849"/>
<dbReference type="CAZy" id="GH22">
    <property type="family name" value="Glycoside Hydrolase Family 22"/>
</dbReference>
<dbReference type="Proteomes" id="UP000694428">
    <property type="component" value="Unplaced"/>
</dbReference>
<dbReference type="GO" id="GO:0005576">
    <property type="term" value="C:extracellular region"/>
    <property type="evidence" value="ECO:0007669"/>
    <property type="project" value="UniProtKB-SubCell"/>
</dbReference>
<dbReference type="GO" id="GO:0003796">
    <property type="term" value="F:lysozyme activity"/>
    <property type="evidence" value="ECO:0007669"/>
    <property type="project" value="UniProtKB-EC"/>
</dbReference>
<dbReference type="GO" id="GO:0050829">
    <property type="term" value="P:defense response to Gram-negative bacterium"/>
    <property type="evidence" value="ECO:0007669"/>
    <property type="project" value="TreeGrafter"/>
</dbReference>
<dbReference type="GO" id="GO:0050830">
    <property type="term" value="P:defense response to Gram-positive bacterium"/>
    <property type="evidence" value="ECO:0007669"/>
    <property type="project" value="TreeGrafter"/>
</dbReference>
<dbReference type="GO" id="GO:0031640">
    <property type="term" value="P:killing of cells of another organism"/>
    <property type="evidence" value="ECO:0007669"/>
    <property type="project" value="UniProtKB-KW"/>
</dbReference>
<dbReference type="CDD" id="cd16897">
    <property type="entry name" value="LYZ_C"/>
    <property type="match status" value="1"/>
</dbReference>
<dbReference type="FunFam" id="1.10.530.10:FF:000001">
    <property type="entry name" value="Lysozyme C"/>
    <property type="match status" value="1"/>
</dbReference>
<dbReference type="Gene3D" id="1.10.530.10">
    <property type="match status" value="1"/>
</dbReference>
<dbReference type="InterPro" id="IPR001916">
    <property type="entry name" value="Glyco_hydro_22"/>
</dbReference>
<dbReference type="InterPro" id="IPR019799">
    <property type="entry name" value="Glyco_hydro_22_CS"/>
</dbReference>
<dbReference type="InterPro" id="IPR000974">
    <property type="entry name" value="Glyco_hydro_22_lys"/>
</dbReference>
<dbReference type="InterPro" id="IPR023346">
    <property type="entry name" value="Lysozyme-like_dom_sf"/>
</dbReference>
<dbReference type="PANTHER" id="PTHR11407">
    <property type="entry name" value="LYSOZYME C"/>
    <property type="match status" value="1"/>
</dbReference>
<dbReference type="PANTHER" id="PTHR11407:SF28">
    <property type="entry name" value="LYSOZYME C"/>
    <property type="match status" value="1"/>
</dbReference>
<dbReference type="Pfam" id="PF00062">
    <property type="entry name" value="Lys"/>
    <property type="match status" value="1"/>
</dbReference>
<dbReference type="PRINTS" id="PR00137">
    <property type="entry name" value="LYSOZYME"/>
</dbReference>
<dbReference type="PRINTS" id="PR00135">
    <property type="entry name" value="LYZLACT"/>
</dbReference>
<dbReference type="SMART" id="SM00263">
    <property type="entry name" value="LYZ1"/>
    <property type="match status" value="1"/>
</dbReference>
<dbReference type="SUPFAM" id="SSF53955">
    <property type="entry name" value="Lysozyme-like"/>
    <property type="match status" value="1"/>
</dbReference>
<dbReference type="PROSITE" id="PS00128">
    <property type="entry name" value="GLYCOSYL_HYDROL_F22_1"/>
    <property type="match status" value="1"/>
</dbReference>
<dbReference type="PROSITE" id="PS51348">
    <property type="entry name" value="GLYCOSYL_HYDROL_F22_2"/>
    <property type="match status" value="1"/>
</dbReference>
<feature type="chain" id="PRO_0000208870" description="Lysozyme C">
    <location>
        <begin position="1"/>
        <end position="129"/>
    </location>
</feature>
<feature type="domain" description="C-type lysozyme" evidence="1">
    <location>
        <begin position="1"/>
        <end position="129"/>
    </location>
</feature>
<feature type="active site" evidence="1">
    <location>
        <position position="35"/>
    </location>
</feature>
<feature type="active site" evidence="1">
    <location>
        <position position="52"/>
    </location>
</feature>
<feature type="disulfide bond" evidence="1">
    <location>
        <begin position="6"/>
        <end position="127"/>
    </location>
</feature>
<feature type="disulfide bond" evidence="1">
    <location>
        <begin position="30"/>
        <end position="115"/>
    </location>
</feature>
<feature type="disulfide bond" evidence="1">
    <location>
        <begin position="64"/>
        <end position="80"/>
    </location>
</feature>
<feature type="disulfide bond" evidence="1">
    <location>
        <begin position="76"/>
        <end position="94"/>
    </location>
</feature>
<reference key="1">
    <citation type="journal article" date="1989" name="Agric. Biol. Chem.">
        <title>The amino acid sequence of Indian peafowl (Pavo cristatus) lysozyme and its comparison with lysozymes from phasianoid birds.</title>
        <authorList>
            <person name="Araki T."/>
            <person name="Kudo K."/>
            <person name="Kuramoto M."/>
            <person name="Torikata T."/>
        </authorList>
    </citation>
    <scope>PROTEIN SEQUENCE</scope>
</reference>
<comment type="function">
    <text>Lysozymes have primarily a bacteriolytic function; those in tissues and body fluids are associated with the monocyte-macrophage system and enhance the activity of immunoagents.</text>
</comment>
<comment type="catalytic activity">
    <reaction>
        <text>Hydrolysis of (1-&gt;4)-beta-linkages between N-acetylmuramic acid and N-acetyl-D-glucosamine residues in a peptidoglycan and between N-acetyl-D-glucosamine residues in chitodextrins.</text>
        <dbReference type="EC" id="3.2.1.17"/>
    </reaction>
</comment>
<comment type="subunit">
    <text>Monomer.</text>
</comment>
<comment type="subcellular location">
    <subcellularLocation>
        <location>Secreted</location>
    </subcellularLocation>
</comment>
<comment type="miscellaneous">
    <text>Lysozyme C is capable of both hydrolysis and transglycosylation; it also shows a slight esterase activity. It acts rapidly on both peptide-substituted and unsubstituted peptidoglycan, and slowly on chitin oligosaccharides.</text>
</comment>
<comment type="similarity">
    <text evidence="1">Belongs to the glycosyl hydrolase 22 family.</text>
</comment>
<accession>P19849</accession>
<protein>
    <recommendedName>
        <fullName>Lysozyme C</fullName>
        <ecNumber>3.2.1.17</ecNumber>
    </recommendedName>
    <alternativeName>
        <fullName>1,4-beta-N-acetylmuramidase</fullName>
    </alternativeName>
</protein>
<gene>
    <name type="primary">LYZ</name>
</gene>
<name>LYSC_PAVCR</name>
<organism>
    <name type="scientific">Pavo cristatus</name>
    <name type="common">Indian peafowl</name>
    <name type="synonym">Blue peafowl</name>
    <dbReference type="NCBI Taxonomy" id="9049"/>
    <lineage>
        <taxon>Eukaryota</taxon>
        <taxon>Metazoa</taxon>
        <taxon>Chordata</taxon>
        <taxon>Craniata</taxon>
        <taxon>Vertebrata</taxon>
        <taxon>Euteleostomi</taxon>
        <taxon>Archelosauria</taxon>
        <taxon>Archosauria</taxon>
        <taxon>Dinosauria</taxon>
        <taxon>Saurischia</taxon>
        <taxon>Theropoda</taxon>
        <taxon>Coelurosauria</taxon>
        <taxon>Aves</taxon>
        <taxon>Neognathae</taxon>
        <taxon>Galloanserae</taxon>
        <taxon>Galliformes</taxon>
        <taxon>Phasianidae</taxon>
        <taxon>Phasianinae</taxon>
        <taxon>Pavo</taxon>
    </lineage>
</organism>
<sequence length="129" mass="14422">KVYGRCELAAAMKRLGLDNYRGYSLGNWVCAAKFESNFNTHATNRNTDGSTDYGILQINSRWWCNDGRTPGSRNLCNIPCSALLSSDITASVNCAKKIVSDRNGMNAWVAWRNRCKGTDVHAWIRGCRL</sequence>
<evidence type="ECO:0000255" key="1">
    <source>
        <dbReference type="PROSITE-ProRule" id="PRU00680"/>
    </source>
</evidence>